<dbReference type="SMR" id="C0HL36"/>
<dbReference type="GO" id="GO:0006952">
    <property type="term" value="P:defense response"/>
    <property type="evidence" value="ECO:0007669"/>
    <property type="project" value="UniProtKB-KW"/>
</dbReference>
<dbReference type="InterPro" id="IPR005535">
    <property type="entry name" value="Cyclotide"/>
</dbReference>
<dbReference type="Pfam" id="PF03784">
    <property type="entry name" value="Cyclotide"/>
    <property type="match status" value="1"/>
</dbReference>
<organism evidence="3">
    <name type="scientific">Gloeospermum pauciflorum</name>
    <dbReference type="NCBI Taxonomy" id="685569"/>
    <lineage>
        <taxon>Eukaryota</taxon>
        <taxon>Viridiplantae</taxon>
        <taxon>Streptophyta</taxon>
        <taxon>Embryophyta</taxon>
        <taxon>Tracheophyta</taxon>
        <taxon>Spermatophyta</taxon>
        <taxon>Magnoliopsida</taxon>
        <taxon>eudicotyledons</taxon>
        <taxon>Gunneridae</taxon>
        <taxon>Pentapetalae</taxon>
        <taxon>rosids</taxon>
        <taxon>fabids</taxon>
        <taxon>Malpighiales</taxon>
        <taxon>Violaceae</taxon>
        <taxon>Gloeospermum</taxon>
    </lineage>
</organism>
<proteinExistence type="evidence at protein level"/>
<sequence length="32" mass="3399">GGSVPCIETCVWTGCFLVPGCSCKSDKKCYLN</sequence>
<feature type="peptide" id="PRO_0000441839" description="Cyclotide glopa B" evidence="2">
    <location>
        <begin position="1"/>
        <end position="32"/>
    </location>
</feature>
<feature type="disulfide bond" evidence="1">
    <location>
        <begin position="6"/>
        <end position="21"/>
    </location>
</feature>
<feature type="disulfide bond" evidence="1">
    <location>
        <begin position="10"/>
        <end position="23"/>
    </location>
</feature>
<feature type="disulfide bond" evidence="1">
    <location>
        <begin position="15"/>
        <end position="29"/>
    </location>
</feature>
<feature type="cross-link" description="Cyclopeptide (Gly-Asn)" evidence="3">
    <location>
        <begin position="1"/>
        <end position="32"/>
    </location>
</feature>
<accession>C0HL36</accession>
<name>CYGPB_GLOPU</name>
<keyword id="KW-0903">Direct protein sequencing</keyword>
<keyword id="KW-1015">Disulfide bond</keyword>
<keyword id="KW-0960">Knottin</keyword>
<keyword id="KW-0611">Plant defense</keyword>
<protein>
    <recommendedName>
        <fullName evidence="3">Cyclotide glopa B</fullName>
    </recommendedName>
</protein>
<comment type="function">
    <text evidence="1">Probably participates in a plant defense mechanism.</text>
</comment>
<comment type="domain">
    <text evidence="4">The presence of a 'disulfide through disulfide knot' structurally defines this protein as a knottin.</text>
</comment>
<comment type="PTM">
    <text evidence="1 2">This is a cyclic peptide.</text>
</comment>
<comment type="mass spectrometry" mass="3373.0" method="Electrospray" evidence="2"/>
<comment type="similarity">
    <text evidence="5">Belongs to the cyclotide family. Bracelet subfamily.</text>
</comment>
<comment type="caution">
    <text evidence="4">This peptide is cyclic. The start position was chosen by similarity to Voc2 (cycloviolacin-O11) for which the DNA sequence is known.</text>
</comment>
<evidence type="ECO:0000255" key="1">
    <source>
        <dbReference type="PROSITE-ProRule" id="PRU00395"/>
    </source>
</evidence>
<evidence type="ECO:0000269" key="2">
    <source>
    </source>
</evidence>
<evidence type="ECO:0000303" key="3">
    <source>
    </source>
</evidence>
<evidence type="ECO:0000305" key="4"/>
<evidence type="ECO:0000305" key="5">
    <source>
    </source>
</evidence>
<reference evidence="4" key="1">
    <citation type="journal article" date="2010" name="Phytochemistry">
        <title>Cyclotide proteins and precursors from the genus Gloeospermum: filling a blank spot in the cyclotide map of Violaceae.</title>
        <authorList>
            <person name="Burman R."/>
            <person name="Gruber C.W."/>
            <person name="Rizzardi K."/>
            <person name="Herrmann A."/>
            <person name="Craik D.J."/>
            <person name="Gupta M.P."/>
            <person name="Goransson U."/>
        </authorList>
    </citation>
    <scope>PROTEIN SEQUENCE</scope>
    <scope>MASS SPECTROMETRY</scope>
    <scope>IDENTIFICATION BY MASS SPECTROMETRY</scope>
    <scope>CYCLIZATION</scope>
    <scope>PRESENCE OF DISULFIDE BONDS</scope>
    <source>
        <tissue evidence="3">Leaf</tissue>
    </source>
</reference>